<gene>
    <name evidence="1" type="primary">udk</name>
    <name type="ordered locus">EFER_2152</name>
</gene>
<proteinExistence type="inferred from homology"/>
<dbReference type="EC" id="2.7.1.48" evidence="1"/>
<dbReference type="EMBL" id="CU928158">
    <property type="protein sequence ID" value="CAQ89655.1"/>
    <property type="molecule type" value="Genomic_DNA"/>
</dbReference>
<dbReference type="RefSeq" id="WP_000132077.1">
    <property type="nucleotide sequence ID" value="NC_011740.1"/>
</dbReference>
<dbReference type="SMR" id="B7LV30"/>
<dbReference type="GeneID" id="86947022"/>
<dbReference type="KEGG" id="efe:EFER_2152"/>
<dbReference type="HOGENOM" id="CLU_021278_1_2_6"/>
<dbReference type="OrthoDB" id="9777642at2"/>
<dbReference type="UniPathway" id="UPA00574">
    <property type="reaction ID" value="UER00637"/>
</dbReference>
<dbReference type="UniPathway" id="UPA00579">
    <property type="reaction ID" value="UER00640"/>
</dbReference>
<dbReference type="Proteomes" id="UP000000745">
    <property type="component" value="Chromosome"/>
</dbReference>
<dbReference type="GO" id="GO:0005737">
    <property type="term" value="C:cytoplasm"/>
    <property type="evidence" value="ECO:0007669"/>
    <property type="project" value="UniProtKB-SubCell"/>
</dbReference>
<dbReference type="GO" id="GO:0005524">
    <property type="term" value="F:ATP binding"/>
    <property type="evidence" value="ECO:0007669"/>
    <property type="project" value="UniProtKB-UniRule"/>
</dbReference>
<dbReference type="GO" id="GO:0043771">
    <property type="term" value="F:cytidine kinase activity"/>
    <property type="evidence" value="ECO:0007669"/>
    <property type="project" value="RHEA"/>
</dbReference>
<dbReference type="GO" id="GO:0004849">
    <property type="term" value="F:uridine kinase activity"/>
    <property type="evidence" value="ECO:0007669"/>
    <property type="project" value="UniProtKB-UniRule"/>
</dbReference>
<dbReference type="GO" id="GO:0044211">
    <property type="term" value="P:CTP salvage"/>
    <property type="evidence" value="ECO:0007669"/>
    <property type="project" value="UniProtKB-UniRule"/>
</dbReference>
<dbReference type="GO" id="GO:0044206">
    <property type="term" value="P:UMP salvage"/>
    <property type="evidence" value="ECO:0007669"/>
    <property type="project" value="UniProtKB-UniRule"/>
</dbReference>
<dbReference type="CDD" id="cd02023">
    <property type="entry name" value="UMPK"/>
    <property type="match status" value="1"/>
</dbReference>
<dbReference type="FunFam" id="3.40.50.300:FF:000252">
    <property type="entry name" value="Uridine kinase"/>
    <property type="match status" value="1"/>
</dbReference>
<dbReference type="Gene3D" id="3.40.50.300">
    <property type="entry name" value="P-loop containing nucleotide triphosphate hydrolases"/>
    <property type="match status" value="1"/>
</dbReference>
<dbReference type="HAMAP" id="MF_00551">
    <property type="entry name" value="Uridine_kinase"/>
    <property type="match status" value="1"/>
</dbReference>
<dbReference type="InterPro" id="IPR027417">
    <property type="entry name" value="P-loop_NTPase"/>
</dbReference>
<dbReference type="InterPro" id="IPR006083">
    <property type="entry name" value="PRK/URK"/>
</dbReference>
<dbReference type="InterPro" id="IPR026008">
    <property type="entry name" value="Uridine_kinase"/>
</dbReference>
<dbReference type="InterPro" id="IPR000764">
    <property type="entry name" value="Uridine_kinase-like"/>
</dbReference>
<dbReference type="NCBIfam" id="NF004018">
    <property type="entry name" value="PRK05480.1"/>
    <property type="match status" value="1"/>
</dbReference>
<dbReference type="NCBIfam" id="TIGR00235">
    <property type="entry name" value="udk"/>
    <property type="match status" value="1"/>
</dbReference>
<dbReference type="PANTHER" id="PTHR10285">
    <property type="entry name" value="URIDINE KINASE"/>
    <property type="match status" value="1"/>
</dbReference>
<dbReference type="Pfam" id="PF00485">
    <property type="entry name" value="PRK"/>
    <property type="match status" value="1"/>
</dbReference>
<dbReference type="PRINTS" id="PR00988">
    <property type="entry name" value="URIDINKINASE"/>
</dbReference>
<dbReference type="SUPFAM" id="SSF52540">
    <property type="entry name" value="P-loop containing nucleoside triphosphate hydrolases"/>
    <property type="match status" value="1"/>
</dbReference>
<feature type="chain" id="PRO_1000129076" description="Uridine kinase">
    <location>
        <begin position="1"/>
        <end position="213"/>
    </location>
</feature>
<feature type="binding site" evidence="1">
    <location>
        <begin position="15"/>
        <end position="22"/>
    </location>
    <ligand>
        <name>ATP</name>
        <dbReference type="ChEBI" id="CHEBI:30616"/>
    </ligand>
</feature>
<keyword id="KW-0067">ATP-binding</keyword>
<keyword id="KW-0963">Cytoplasm</keyword>
<keyword id="KW-0418">Kinase</keyword>
<keyword id="KW-0547">Nucleotide-binding</keyword>
<keyword id="KW-0808">Transferase</keyword>
<comment type="catalytic activity">
    <reaction evidence="1">
        <text>uridine + ATP = UMP + ADP + H(+)</text>
        <dbReference type="Rhea" id="RHEA:16825"/>
        <dbReference type="ChEBI" id="CHEBI:15378"/>
        <dbReference type="ChEBI" id="CHEBI:16704"/>
        <dbReference type="ChEBI" id="CHEBI:30616"/>
        <dbReference type="ChEBI" id="CHEBI:57865"/>
        <dbReference type="ChEBI" id="CHEBI:456216"/>
        <dbReference type="EC" id="2.7.1.48"/>
    </reaction>
</comment>
<comment type="catalytic activity">
    <reaction evidence="1">
        <text>cytidine + ATP = CMP + ADP + H(+)</text>
        <dbReference type="Rhea" id="RHEA:24674"/>
        <dbReference type="ChEBI" id="CHEBI:15378"/>
        <dbReference type="ChEBI" id="CHEBI:17562"/>
        <dbReference type="ChEBI" id="CHEBI:30616"/>
        <dbReference type="ChEBI" id="CHEBI:60377"/>
        <dbReference type="ChEBI" id="CHEBI:456216"/>
        <dbReference type="EC" id="2.7.1.48"/>
    </reaction>
</comment>
<comment type="pathway">
    <text evidence="1">Pyrimidine metabolism; CTP biosynthesis via salvage pathway; CTP from cytidine: step 1/3.</text>
</comment>
<comment type="pathway">
    <text evidence="1">Pyrimidine metabolism; UMP biosynthesis via salvage pathway; UMP from uridine: step 1/1.</text>
</comment>
<comment type="subcellular location">
    <subcellularLocation>
        <location evidence="1">Cytoplasm</location>
    </subcellularLocation>
</comment>
<comment type="similarity">
    <text evidence="1">Belongs to the uridine kinase family.</text>
</comment>
<sequence>MTDQSHQCVIIGIAGASASGKSLIASTLYRELREQVGDEHIGVIPEDCYYKDQSHLSMEERVKTNYDHPSAMDHSLLLEHLQALKRGSAIDLPVYSYVEHTRMKETVKVEPKKVIILEGILLLTDARLRDELNFSIFVDTPLDICLMRRIKRDVNERGRSMDSVMAQYQKTVRPMFLQFIEPSKQYADIIVPRGGKNRIAIDILKAKISQFFE</sequence>
<accession>B7LV30</accession>
<evidence type="ECO:0000255" key="1">
    <source>
        <dbReference type="HAMAP-Rule" id="MF_00551"/>
    </source>
</evidence>
<organism>
    <name type="scientific">Escherichia fergusonii (strain ATCC 35469 / DSM 13698 / CCUG 18766 / IAM 14443 / JCM 21226 / LMG 7866 / NBRC 102419 / NCTC 12128 / CDC 0568-73)</name>
    <dbReference type="NCBI Taxonomy" id="585054"/>
    <lineage>
        <taxon>Bacteria</taxon>
        <taxon>Pseudomonadati</taxon>
        <taxon>Pseudomonadota</taxon>
        <taxon>Gammaproteobacteria</taxon>
        <taxon>Enterobacterales</taxon>
        <taxon>Enterobacteriaceae</taxon>
        <taxon>Escherichia</taxon>
    </lineage>
</organism>
<reference key="1">
    <citation type="journal article" date="2009" name="PLoS Genet.">
        <title>Organised genome dynamics in the Escherichia coli species results in highly diverse adaptive paths.</title>
        <authorList>
            <person name="Touchon M."/>
            <person name="Hoede C."/>
            <person name="Tenaillon O."/>
            <person name="Barbe V."/>
            <person name="Baeriswyl S."/>
            <person name="Bidet P."/>
            <person name="Bingen E."/>
            <person name="Bonacorsi S."/>
            <person name="Bouchier C."/>
            <person name="Bouvet O."/>
            <person name="Calteau A."/>
            <person name="Chiapello H."/>
            <person name="Clermont O."/>
            <person name="Cruveiller S."/>
            <person name="Danchin A."/>
            <person name="Diard M."/>
            <person name="Dossat C."/>
            <person name="Karoui M.E."/>
            <person name="Frapy E."/>
            <person name="Garry L."/>
            <person name="Ghigo J.M."/>
            <person name="Gilles A.M."/>
            <person name="Johnson J."/>
            <person name="Le Bouguenec C."/>
            <person name="Lescat M."/>
            <person name="Mangenot S."/>
            <person name="Martinez-Jehanne V."/>
            <person name="Matic I."/>
            <person name="Nassif X."/>
            <person name="Oztas S."/>
            <person name="Petit M.A."/>
            <person name="Pichon C."/>
            <person name="Rouy Z."/>
            <person name="Ruf C.S."/>
            <person name="Schneider D."/>
            <person name="Tourret J."/>
            <person name="Vacherie B."/>
            <person name="Vallenet D."/>
            <person name="Medigue C."/>
            <person name="Rocha E.P.C."/>
            <person name="Denamur E."/>
        </authorList>
    </citation>
    <scope>NUCLEOTIDE SEQUENCE [LARGE SCALE GENOMIC DNA]</scope>
    <source>
        <strain>ATCC 35469 / DSM 13698 / BCRC 15582 / CCUG 18766 / IAM 14443 / JCM 21226 / LMG 7866 / NBRC 102419 / NCTC 12128 / CDC 0568-73</strain>
    </source>
</reference>
<name>URK_ESCF3</name>
<protein>
    <recommendedName>
        <fullName evidence="1">Uridine kinase</fullName>
        <ecNumber evidence="1">2.7.1.48</ecNumber>
    </recommendedName>
    <alternativeName>
        <fullName evidence="1">Cytidine monophosphokinase</fullName>
    </alternativeName>
    <alternativeName>
        <fullName evidence="1">Uridine monophosphokinase</fullName>
    </alternativeName>
</protein>